<sequence>MMQPLYLVGPRGCGKTTIGMALAQATGFRFADTDRWLQSHVQMSVADIVEKEGWGGFRARETAALEAVSAPSTVVATGGGIILTEYNRRYMHRVGVVIYLCAPVSTLVNRLEAEPEADLRPTLTGKPLSEEVREVLEQRDALYRETAHYIIDATKAPAQVVSEIIAALPPSTQRLQGDVYT</sequence>
<evidence type="ECO:0000255" key="1">
    <source>
        <dbReference type="HAMAP-Rule" id="MF_01269"/>
    </source>
</evidence>
<gene>
    <name evidence="1" type="primary">aroL</name>
    <name type="ordered locus">STY0421</name>
    <name type="ordered locus">t2476</name>
</gene>
<keyword id="KW-0028">Amino-acid biosynthesis</keyword>
<keyword id="KW-0057">Aromatic amino acid biosynthesis</keyword>
<keyword id="KW-0067">ATP-binding</keyword>
<keyword id="KW-0963">Cytoplasm</keyword>
<keyword id="KW-0418">Kinase</keyword>
<keyword id="KW-0460">Magnesium</keyword>
<keyword id="KW-0479">Metal-binding</keyword>
<keyword id="KW-0547">Nucleotide-binding</keyword>
<keyword id="KW-0808">Transferase</keyword>
<feature type="chain" id="PRO_0000192405" description="Shikimate kinase 2">
    <location>
        <begin position="1"/>
        <end position="181"/>
    </location>
</feature>
<feature type="region of interest" description="LID domain">
    <location>
        <begin position="112"/>
        <end position="126"/>
    </location>
</feature>
<feature type="binding site" evidence="1">
    <location>
        <begin position="12"/>
        <end position="17"/>
    </location>
    <ligand>
        <name>ATP</name>
        <dbReference type="ChEBI" id="CHEBI:30616"/>
    </ligand>
</feature>
<feature type="binding site" evidence="1">
    <location>
        <position position="16"/>
    </location>
    <ligand>
        <name>Mg(2+)</name>
        <dbReference type="ChEBI" id="CHEBI:18420"/>
    </ligand>
</feature>
<feature type="binding site" evidence="1">
    <location>
        <position position="32"/>
    </location>
    <ligand>
        <name>Mg(2+)</name>
        <dbReference type="ChEBI" id="CHEBI:18420"/>
    </ligand>
</feature>
<feature type="binding site" evidence="1">
    <location>
        <position position="34"/>
    </location>
    <ligand>
        <name>substrate</name>
    </ligand>
</feature>
<feature type="binding site" evidence="1">
    <location>
        <position position="58"/>
    </location>
    <ligand>
        <name>substrate</name>
    </ligand>
</feature>
<feature type="binding site" evidence="1">
    <location>
        <position position="79"/>
    </location>
    <ligand>
        <name>substrate</name>
    </ligand>
</feature>
<feature type="binding site" evidence="1">
    <location>
        <position position="120"/>
    </location>
    <ligand>
        <name>ATP</name>
        <dbReference type="ChEBI" id="CHEBI:30616"/>
    </ligand>
</feature>
<feature type="binding site" evidence="1">
    <location>
        <position position="139"/>
    </location>
    <ligand>
        <name>substrate</name>
    </ligand>
</feature>
<accession>P63604</accession>
<accession>Q8XEP9</accession>
<protein>
    <recommendedName>
        <fullName evidence="1">Shikimate kinase 2</fullName>
        <shortName evidence="1">SK 2</shortName>
        <ecNumber evidence="1">2.7.1.71</ecNumber>
    </recommendedName>
</protein>
<name>AROL_SALTI</name>
<dbReference type="EC" id="2.7.1.71" evidence="1"/>
<dbReference type="EMBL" id="AL513382">
    <property type="protein sequence ID" value="CAD08843.1"/>
    <property type="molecule type" value="Genomic_DNA"/>
</dbReference>
<dbReference type="EMBL" id="AE014613">
    <property type="protein sequence ID" value="AAO70064.1"/>
    <property type="molecule type" value="Genomic_DNA"/>
</dbReference>
<dbReference type="RefSeq" id="NP_454983.1">
    <property type="nucleotide sequence ID" value="NC_003198.1"/>
</dbReference>
<dbReference type="RefSeq" id="WP_000983569.1">
    <property type="nucleotide sequence ID" value="NZ_WSUR01000017.1"/>
</dbReference>
<dbReference type="SMR" id="P63604"/>
<dbReference type="STRING" id="220341.gene:17584448"/>
<dbReference type="KEGG" id="stt:t2476"/>
<dbReference type="KEGG" id="sty:STY0421"/>
<dbReference type="PATRIC" id="fig|220341.7.peg.419"/>
<dbReference type="eggNOG" id="COG0703">
    <property type="taxonomic scope" value="Bacteria"/>
</dbReference>
<dbReference type="HOGENOM" id="CLU_057607_4_3_6"/>
<dbReference type="OMA" id="DTDIFMQ"/>
<dbReference type="OrthoDB" id="9800332at2"/>
<dbReference type="UniPathway" id="UPA00053">
    <property type="reaction ID" value="UER00088"/>
</dbReference>
<dbReference type="Proteomes" id="UP000000541">
    <property type="component" value="Chromosome"/>
</dbReference>
<dbReference type="Proteomes" id="UP000002670">
    <property type="component" value="Chromosome"/>
</dbReference>
<dbReference type="GO" id="GO:0005829">
    <property type="term" value="C:cytosol"/>
    <property type="evidence" value="ECO:0007669"/>
    <property type="project" value="TreeGrafter"/>
</dbReference>
<dbReference type="GO" id="GO:0005524">
    <property type="term" value="F:ATP binding"/>
    <property type="evidence" value="ECO:0007669"/>
    <property type="project" value="UniProtKB-UniRule"/>
</dbReference>
<dbReference type="GO" id="GO:0000287">
    <property type="term" value="F:magnesium ion binding"/>
    <property type="evidence" value="ECO:0007669"/>
    <property type="project" value="UniProtKB-UniRule"/>
</dbReference>
<dbReference type="GO" id="GO:0004765">
    <property type="term" value="F:shikimate kinase activity"/>
    <property type="evidence" value="ECO:0007669"/>
    <property type="project" value="UniProtKB-UniRule"/>
</dbReference>
<dbReference type="GO" id="GO:0008652">
    <property type="term" value="P:amino acid biosynthetic process"/>
    <property type="evidence" value="ECO:0007669"/>
    <property type="project" value="UniProtKB-KW"/>
</dbReference>
<dbReference type="GO" id="GO:0009073">
    <property type="term" value="P:aromatic amino acid family biosynthetic process"/>
    <property type="evidence" value="ECO:0007669"/>
    <property type="project" value="UniProtKB-KW"/>
</dbReference>
<dbReference type="GO" id="GO:0009423">
    <property type="term" value="P:chorismate biosynthetic process"/>
    <property type="evidence" value="ECO:0007669"/>
    <property type="project" value="UniProtKB-UniRule"/>
</dbReference>
<dbReference type="CDD" id="cd00464">
    <property type="entry name" value="SK"/>
    <property type="match status" value="1"/>
</dbReference>
<dbReference type="FunFam" id="3.40.50.300:FF:000408">
    <property type="entry name" value="Shikimate kinase 2"/>
    <property type="match status" value="1"/>
</dbReference>
<dbReference type="Gene3D" id="3.40.50.300">
    <property type="entry name" value="P-loop containing nucleotide triphosphate hydrolases"/>
    <property type="match status" value="1"/>
</dbReference>
<dbReference type="HAMAP" id="MF_00109">
    <property type="entry name" value="Shikimate_kinase"/>
    <property type="match status" value="1"/>
</dbReference>
<dbReference type="HAMAP" id="MF_01269">
    <property type="entry name" value="Shikimate_kinase_2"/>
    <property type="match status" value="1"/>
</dbReference>
<dbReference type="InterPro" id="IPR027417">
    <property type="entry name" value="P-loop_NTPase"/>
</dbReference>
<dbReference type="InterPro" id="IPR031322">
    <property type="entry name" value="Shikimate/glucono_kinase"/>
</dbReference>
<dbReference type="InterPro" id="IPR000623">
    <property type="entry name" value="Shikimate_kinase/TSH1"/>
</dbReference>
<dbReference type="InterPro" id="IPR027544">
    <property type="entry name" value="Shikimate_kinase_2"/>
</dbReference>
<dbReference type="InterPro" id="IPR023000">
    <property type="entry name" value="Shikimate_kinase_CS"/>
</dbReference>
<dbReference type="NCBIfam" id="NF002988">
    <property type="entry name" value="PRK03731.1"/>
    <property type="match status" value="1"/>
</dbReference>
<dbReference type="PANTHER" id="PTHR21087">
    <property type="entry name" value="SHIKIMATE KINASE"/>
    <property type="match status" value="1"/>
</dbReference>
<dbReference type="PANTHER" id="PTHR21087:SF21">
    <property type="entry name" value="SHIKIMATE KINASE 2"/>
    <property type="match status" value="1"/>
</dbReference>
<dbReference type="Pfam" id="PF01202">
    <property type="entry name" value="SKI"/>
    <property type="match status" value="1"/>
</dbReference>
<dbReference type="PRINTS" id="PR01100">
    <property type="entry name" value="SHIKIMTKNASE"/>
</dbReference>
<dbReference type="SUPFAM" id="SSF52540">
    <property type="entry name" value="P-loop containing nucleoside triphosphate hydrolases"/>
    <property type="match status" value="1"/>
</dbReference>
<dbReference type="PROSITE" id="PS01128">
    <property type="entry name" value="SHIKIMATE_KINASE"/>
    <property type="match status" value="1"/>
</dbReference>
<comment type="function">
    <text evidence="1">Catalyzes the specific phosphorylation of the 3-hydroxyl group of shikimic acid using ATP as a cosubstrate.</text>
</comment>
<comment type="catalytic activity">
    <reaction evidence="1">
        <text>shikimate + ATP = 3-phosphoshikimate + ADP + H(+)</text>
        <dbReference type="Rhea" id="RHEA:13121"/>
        <dbReference type="ChEBI" id="CHEBI:15378"/>
        <dbReference type="ChEBI" id="CHEBI:30616"/>
        <dbReference type="ChEBI" id="CHEBI:36208"/>
        <dbReference type="ChEBI" id="CHEBI:145989"/>
        <dbReference type="ChEBI" id="CHEBI:456216"/>
        <dbReference type="EC" id="2.7.1.71"/>
    </reaction>
</comment>
<comment type="cofactor">
    <cofactor evidence="1">
        <name>Mg(2+)</name>
        <dbReference type="ChEBI" id="CHEBI:18420"/>
    </cofactor>
    <text evidence="1">Binds 1 Mg(2+) ion per subunit.</text>
</comment>
<comment type="pathway">
    <text evidence="1">Metabolic intermediate biosynthesis; chorismate biosynthesis; chorismate from D-erythrose 4-phosphate and phosphoenolpyruvate: step 5/7.</text>
</comment>
<comment type="subunit">
    <text evidence="1">Monomer.</text>
</comment>
<comment type="subcellular location">
    <subcellularLocation>
        <location evidence="1">Cytoplasm</location>
    </subcellularLocation>
</comment>
<comment type="domain">
    <text evidence="1">The LID domain closes over the active site upon ATP binding.</text>
</comment>
<comment type="similarity">
    <text evidence="1">Belongs to the shikimate kinase family. AroL subfamily.</text>
</comment>
<reference key="1">
    <citation type="journal article" date="2001" name="Nature">
        <title>Complete genome sequence of a multiple drug resistant Salmonella enterica serovar Typhi CT18.</title>
        <authorList>
            <person name="Parkhill J."/>
            <person name="Dougan G."/>
            <person name="James K.D."/>
            <person name="Thomson N.R."/>
            <person name="Pickard D."/>
            <person name="Wain J."/>
            <person name="Churcher C.M."/>
            <person name="Mungall K.L."/>
            <person name="Bentley S.D."/>
            <person name="Holden M.T.G."/>
            <person name="Sebaihia M."/>
            <person name="Baker S."/>
            <person name="Basham D."/>
            <person name="Brooks K."/>
            <person name="Chillingworth T."/>
            <person name="Connerton P."/>
            <person name="Cronin A."/>
            <person name="Davis P."/>
            <person name="Davies R.M."/>
            <person name="Dowd L."/>
            <person name="White N."/>
            <person name="Farrar J."/>
            <person name="Feltwell T."/>
            <person name="Hamlin N."/>
            <person name="Haque A."/>
            <person name="Hien T.T."/>
            <person name="Holroyd S."/>
            <person name="Jagels K."/>
            <person name="Krogh A."/>
            <person name="Larsen T.S."/>
            <person name="Leather S."/>
            <person name="Moule S."/>
            <person name="O'Gaora P."/>
            <person name="Parry C."/>
            <person name="Quail M.A."/>
            <person name="Rutherford K.M."/>
            <person name="Simmonds M."/>
            <person name="Skelton J."/>
            <person name="Stevens K."/>
            <person name="Whitehead S."/>
            <person name="Barrell B.G."/>
        </authorList>
    </citation>
    <scope>NUCLEOTIDE SEQUENCE [LARGE SCALE GENOMIC DNA]</scope>
    <source>
        <strain>CT18</strain>
    </source>
</reference>
<reference key="2">
    <citation type="journal article" date="2003" name="J. Bacteriol.">
        <title>Comparative genomics of Salmonella enterica serovar Typhi strains Ty2 and CT18.</title>
        <authorList>
            <person name="Deng W."/>
            <person name="Liou S.-R."/>
            <person name="Plunkett G. III"/>
            <person name="Mayhew G.F."/>
            <person name="Rose D.J."/>
            <person name="Burland V."/>
            <person name="Kodoyianni V."/>
            <person name="Schwartz D.C."/>
            <person name="Blattner F.R."/>
        </authorList>
    </citation>
    <scope>NUCLEOTIDE SEQUENCE [LARGE SCALE GENOMIC DNA]</scope>
    <source>
        <strain>ATCC 700931 / Ty2</strain>
    </source>
</reference>
<organism>
    <name type="scientific">Salmonella typhi</name>
    <dbReference type="NCBI Taxonomy" id="90370"/>
    <lineage>
        <taxon>Bacteria</taxon>
        <taxon>Pseudomonadati</taxon>
        <taxon>Pseudomonadota</taxon>
        <taxon>Gammaproteobacteria</taxon>
        <taxon>Enterobacterales</taxon>
        <taxon>Enterobacteriaceae</taxon>
        <taxon>Salmonella</taxon>
    </lineage>
</organism>
<proteinExistence type="inferred from homology"/>